<accession>A3MM44</accession>
<reference key="1">
    <citation type="journal article" date="2010" name="Genome Biol. Evol.">
        <title>Continuing evolution of Burkholderia mallei through genome reduction and large-scale rearrangements.</title>
        <authorList>
            <person name="Losada L."/>
            <person name="Ronning C.M."/>
            <person name="DeShazer D."/>
            <person name="Woods D."/>
            <person name="Fedorova N."/>
            <person name="Kim H.S."/>
            <person name="Shabalina S.A."/>
            <person name="Pearson T.R."/>
            <person name="Brinkac L."/>
            <person name="Tan P."/>
            <person name="Nandi T."/>
            <person name="Crabtree J."/>
            <person name="Badger J."/>
            <person name="Beckstrom-Sternberg S."/>
            <person name="Saqib M."/>
            <person name="Schutzer S.E."/>
            <person name="Keim P."/>
            <person name="Nierman W.C."/>
        </authorList>
    </citation>
    <scope>NUCLEOTIDE SEQUENCE [LARGE SCALE GENOMIC DNA]</scope>
    <source>
        <strain>NCTC 10247</strain>
    </source>
</reference>
<protein>
    <recommendedName>
        <fullName evidence="1">Elongation factor 4</fullName>
        <shortName evidence="1">EF-4</shortName>
        <ecNumber evidence="1">3.6.5.n1</ecNumber>
    </recommendedName>
    <alternativeName>
        <fullName evidence="1">Ribosomal back-translocase LepA</fullName>
    </alternativeName>
</protein>
<keyword id="KW-0997">Cell inner membrane</keyword>
<keyword id="KW-1003">Cell membrane</keyword>
<keyword id="KW-0342">GTP-binding</keyword>
<keyword id="KW-0378">Hydrolase</keyword>
<keyword id="KW-0472">Membrane</keyword>
<keyword id="KW-0547">Nucleotide-binding</keyword>
<keyword id="KW-0648">Protein biosynthesis</keyword>
<proteinExistence type="inferred from homology"/>
<feature type="chain" id="PRO_1000031974" description="Elongation factor 4">
    <location>
        <begin position="1"/>
        <end position="597"/>
    </location>
</feature>
<feature type="domain" description="tr-type G">
    <location>
        <begin position="2"/>
        <end position="184"/>
    </location>
</feature>
<feature type="binding site" evidence="1">
    <location>
        <begin position="14"/>
        <end position="19"/>
    </location>
    <ligand>
        <name>GTP</name>
        <dbReference type="ChEBI" id="CHEBI:37565"/>
    </ligand>
</feature>
<feature type="binding site" evidence="1">
    <location>
        <begin position="131"/>
        <end position="134"/>
    </location>
    <ligand>
        <name>GTP</name>
        <dbReference type="ChEBI" id="CHEBI:37565"/>
    </ligand>
</feature>
<comment type="function">
    <text evidence="1">Required for accurate and efficient protein synthesis under certain stress conditions. May act as a fidelity factor of the translation reaction, by catalyzing a one-codon backward translocation of tRNAs on improperly translocated ribosomes. Back-translocation proceeds from a post-translocation (POST) complex to a pre-translocation (PRE) complex, thus giving elongation factor G a second chance to translocate the tRNAs correctly. Binds to ribosomes in a GTP-dependent manner.</text>
</comment>
<comment type="catalytic activity">
    <reaction evidence="1">
        <text>GTP + H2O = GDP + phosphate + H(+)</text>
        <dbReference type="Rhea" id="RHEA:19669"/>
        <dbReference type="ChEBI" id="CHEBI:15377"/>
        <dbReference type="ChEBI" id="CHEBI:15378"/>
        <dbReference type="ChEBI" id="CHEBI:37565"/>
        <dbReference type="ChEBI" id="CHEBI:43474"/>
        <dbReference type="ChEBI" id="CHEBI:58189"/>
        <dbReference type="EC" id="3.6.5.n1"/>
    </reaction>
</comment>
<comment type="subcellular location">
    <subcellularLocation>
        <location evidence="1">Cell inner membrane</location>
        <topology evidence="1">Peripheral membrane protein</topology>
        <orientation evidence="1">Cytoplasmic side</orientation>
    </subcellularLocation>
</comment>
<comment type="similarity">
    <text evidence="1">Belongs to the TRAFAC class translation factor GTPase superfamily. Classic translation factor GTPase family. LepA subfamily.</text>
</comment>
<evidence type="ECO:0000255" key="1">
    <source>
        <dbReference type="HAMAP-Rule" id="MF_00071"/>
    </source>
</evidence>
<organism>
    <name type="scientific">Burkholderia mallei (strain NCTC 10247)</name>
    <dbReference type="NCBI Taxonomy" id="320389"/>
    <lineage>
        <taxon>Bacteria</taxon>
        <taxon>Pseudomonadati</taxon>
        <taxon>Pseudomonadota</taxon>
        <taxon>Betaproteobacteria</taxon>
        <taxon>Burkholderiales</taxon>
        <taxon>Burkholderiaceae</taxon>
        <taxon>Burkholderia</taxon>
        <taxon>pseudomallei group</taxon>
    </lineage>
</organism>
<gene>
    <name evidence="1" type="primary">lepA</name>
    <name type="ordered locus">BMA10247_1791</name>
</gene>
<dbReference type="EC" id="3.6.5.n1" evidence="1"/>
<dbReference type="EMBL" id="CP000548">
    <property type="protein sequence ID" value="ABO04165.1"/>
    <property type="molecule type" value="Genomic_DNA"/>
</dbReference>
<dbReference type="RefSeq" id="WP_004193305.1">
    <property type="nucleotide sequence ID" value="NZ_CP007802.1"/>
</dbReference>
<dbReference type="SMR" id="A3MM44"/>
<dbReference type="GeneID" id="93061011"/>
<dbReference type="KEGG" id="bmaz:BM44_1408"/>
<dbReference type="KEGG" id="bmn:BMA10247_1791"/>
<dbReference type="PATRIC" id="fig|320389.8.peg.1569"/>
<dbReference type="GO" id="GO:0005886">
    <property type="term" value="C:plasma membrane"/>
    <property type="evidence" value="ECO:0007669"/>
    <property type="project" value="UniProtKB-SubCell"/>
</dbReference>
<dbReference type="GO" id="GO:0005525">
    <property type="term" value="F:GTP binding"/>
    <property type="evidence" value="ECO:0007669"/>
    <property type="project" value="UniProtKB-UniRule"/>
</dbReference>
<dbReference type="GO" id="GO:0003924">
    <property type="term" value="F:GTPase activity"/>
    <property type="evidence" value="ECO:0007669"/>
    <property type="project" value="UniProtKB-UniRule"/>
</dbReference>
<dbReference type="GO" id="GO:0097216">
    <property type="term" value="F:guanosine tetraphosphate binding"/>
    <property type="evidence" value="ECO:0007669"/>
    <property type="project" value="UniProtKB-ARBA"/>
</dbReference>
<dbReference type="GO" id="GO:0043022">
    <property type="term" value="F:ribosome binding"/>
    <property type="evidence" value="ECO:0007669"/>
    <property type="project" value="UniProtKB-UniRule"/>
</dbReference>
<dbReference type="GO" id="GO:0003746">
    <property type="term" value="F:translation elongation factor activity"/>
    <property type="evidence" value="ECO:0007669"/>
    <property type="project" value="UniProtKB-UniRule"/>
</dbReference>
<dbReference type="GO" id="GO:0045727">
    <property type="term" value="P:positive regulation of translation"/>
    <property type="evidence" value="ECO:0007669"/>
    <property type="project" value="UniProtKB-UniRule"/>
</dbReference>
<dbReference type="CDD" id="cd03699">
    <property type="entry name" value="EF4_II"/>
    <property type="match status" value="1"/>
</dbReference>
<dbReference type="CDD" id="cd16260">
    <property type="entry name" value="EF4_III"/>
    <property type="match status" value="1"/>
</dbReference>
<dbReference type="CDD" id="cd01890">
    <property type="entry name" value="LepA"/>
    <property type="match status" value="1"/>
</dbReference>
<dbReference type="CDD" id="cd03709">
    <property type="entry name" value="lepA_C"/>
    <property type="match status" value="1"/>
</dbReference>
<dbReference type="FunFam" id="3.40.50.300:FF:000078">
    <property type="entry name" value="Elongation factor 4"/>
    <property type="match status" value="1"/>
</dbReference>
<dbReference type="FunFam" id="2.40.30.10:FF:000015">
    <property type="entry name" value="Translation factor GUF1, mitochondrial"/>
    <property type="match status" value="1"/>
</dbReference>
<dbReference type="FunFam" id="3.30.70.240:FF:000007">
    <property type="entry name" value="Translation factor GUF1, mitochondrial"/>
    <property type="match status" value="1"/>
</dbReference>
<dbReference type="FunFam" id="3.30.70.2570:FF:000001">
    <property type="entry name" value="Translation factor GUF1, mitochondrial"/>
    <property type="match status" value="1"/>
</dbReference>
<dbReference type="FunFam" id="3.30.70.870:FF:000004">
    <property type="entry name" value="Translation factor GUF1, mitochondrial"/>
    <property type="match status" value="1"/>
</dbReference>
<dbReference type="Gene3D" id="3.30.70.240">
    <property type="match status" value="1"/>
</dbReference>
<dbReference type="Gene3D" id="3.30.70.2570">
    <property type="entry name" value="Elongation factor 4, C-terminal domain"/>
    <property type="match status" value="1"/>
</dbReference>
<dbReference type="Gene3D" id="3.30.70.870">
    <property type="entry name" value="Elongation Factor G (Translational Gtpase), domain 3"/>
    <property type="match status" value="1"/>
</dbReference>
<dbReference type="Gene3D" id="3.40.50.300">
    <property type="entry name" value="P-loop containing nucleotide triphosphate hydrolases"/>
    <property type="match status" value="1"/>
</dbReference>
<dbReference type="Gene3D" id="2.40.30.10">
    <property type="entry name" value="Translation factors"/>
    <property type="match status" value="1"/>
</dbReference>
<dbReference type="HAMAP" id="MF_00071">
    <property type="entry name" value="LepA"/>
    <property type="match status" value="1"/>
</dbReference>
<dbReference type="InterPro" id="IPR006297">
    <property type="entry name" value="EF-4"/>
</dbReference>
<dbReference type="InterPro" id="IPR035647">
    <property type="entry name" value="EFG_III/V"/>
</dbReference>
<dbReference type="InterPro" id="IPR000640">
    <property type="entry name" value="EFG_V-like"/>
</dbReference>
<dbReference type="InterPro" id="IPR004161">
    <property type="entry name" value="EFTu-like_2"/>
</dbReference>
<dbReference type="InterPro" id="IPR031157">
    <property type="entry name" value="G_TR_CS"/>
</dbReference>
<dbReference type="InterPro" id="IPR038363">
    <property type="entry name" value="LepA_C_sf"/>
</dbReference>
<dbReference type="InterPro" id="IPR013842">
    <property type="entry name" value="LepA_CTD"/>
</dbReference>
<dbReference type="InterPro" id="IPR035654">
    <property type="entry name" value="LepA_IV"/>
</dbReference>
<dbReference type="InterPro" id="IPR027417">
    <property type="entry name" value="P-loop_NTPase"/>
</dbReference>
<dbReference type="InterPro" id="IPR005225">
    <property type="entry name" value="Small_GTP-bd"/>
</dbReference>
<dbReference type="InterPro" id="IPR000795">
    <property type="entry name" value="T_Tr_GTP-bd_dom"/>
</dbReference>
<dbReference type="InterPro" id="IPR009000">
    <property type="entry name" value="Transl_B-barrel_sf"/>
</dbReference>
<dbReference type="NCBIfam" id="TIGR01393">
    <property type="entry name" value="lepA"/>
    <property type="match status" value="1"/>
</dbReference>
<dbReference type="NCBIfam" id="TIGR00231">
    <property type="entry name" value="small_GTP"/>
    <property type="match status" value="1"/>
</dbReference>
<dbReference type="PANTHER" id="PTHR43512:SF4">
    <property type="entry name" value="TRANSLATION FACTOR GUF1 HOMOLOG, CHLOROPLASTIC"/>
    <property type="match status" value="1"/>
</dbReference>
<dbReference type="PANTHER" id="PTHR43512">
    <property type="entry name" value="TRANSLATION FACTOR GUF1-RELATED"/>
    <property type="match status" value="1"/>
</dbReference>
<dbReference type="Pfam" id="PF00679">
    <property type="entry name" value="EFG_C"/>
    <property type="match status" value="1"/>
</dbReference>
<dbReference type="Pfam" id="PF00009">
    <property type="entry name" value="GTP_EFTU"/>
    <property type="match status" value="1"/>
</dbReference>
<dbReference type="Pfam" id="PF03144">
    <property type="entry name" value="GTP_EFTU_D2"/>
    <property type="match status" value="1"/>
</dbReference>
<dbReference type="Pfam" id="PF06421">
    <property type="entry name" value="LepA_C"/>
    <property type="match status" value="1"/>
</dbReference>
<dbReference type="PRINTS" id="PR00315">
    <property type="entry name" value="ELONGATNFCT"/>
</dbReference>
<dbReference type="SMART" id="SM00838">
    <property type="entry name" value="EFG_C"/>
    <property type="match status" value="1"/>
</dbReference>
<dbReference type="SUPFAM" id="SSF54980">
    <property type="entry name" value="EF-G C-terminal domain-like"/>
    <property type="match status" value="2"/>
</dbReference>
<dbReference type="SUPFAM" id="SSF52540">
    <property type="entry name" value="P-loop containing nucleoside triphosphate hydrolases"/>
    <property type="match status" value="1"/>
</dbReference>
<dbReference type="SUPFAM" id="SSF50447">
    <property type="entry name" value="Translation proteins"/>
    <property type="match status" value="1"/>
</dbReference>
<dbReference type="PROSITE" id="PS00301">
    <property type="entry name" value="G_TR_1"/>
    <property type="match status" value="1"/>
</dbReference>
<dbReference type="PROSITE" id="PS51722">
    <property type="entry name" value="G_TR_2"/>
    <property type="match status" value="1"/>
</dbReference>
<sequence>MDHIRNFSIIAHIDHGKSTLADRIIQLCGGLSDREMESQVLDSMDLERERGITIKAQTAALTYRARDGKVYNLNLIDTPGHVDFSYEVSRSLSACEGALLVVDASQGVEAQTVANCYTAIELGVEVVPVLNKIDLPAANPENAIAEIEDVIGIDAMDAVRCSAKTGLGVEDVLESLIAKVPPPKGDPDAPLQALIIDSWFDNYVGVVMLVRIVNGTLRPKERIKLMATDAQYAVEHVGVFTPKSRNLESLSAGQVGFIISGIKELTAAKVGDTVTHATKPAPEPLPGFKEVKPQVFAGLYPVEANQYDALRESLEKLKLNDASLQYEPEVSQALGFGFRCGFLGLLHMEIVQERLEREFDMDLITTAPTVVYEVVQSDGTTIMVENPAKMPEPARIAEIREPIVTVNLYMPQDYVGSVITLCEQKRGTQINMQYHGRQVQLTYEIPMAEIVLDFFDRLKSVSRGYASMDYEFKEYRTSDVVKVDMLINGDKVDALSIIVHRSQSQYRGREVAAKMREIIPRQMYDVAIQAAIGAHIIARENIKALRKNVLAKCYGGDITRKKKLLEKQKEGKKRMKQVGSVEIPQEAFLAILRVEDK</sequence>
<name>LEPA_BURM7</name>